<name>RS21_BUCAP</name>
<accession>Q8KA57</accession>
<sequence>MPIIKVRENEPFDVALRRFKRSCEKAGILAEIRRREFYEKPTTERKRAKASAIKRLAKKLTRENARRIRMY</sequence>
<protein>
    <recommendedName>
        <fullName evidence="1">Small ribosomal subunit protein bS21</fullName>
    </recommendedName>
    <alternativeName>
        <fullName evidence="2">30S ribosomal protein S21</fullName>
    </alternativeName>
</protein>
<reference key="1">
    <citation type="journal article" date="2002" name="Science">
        <title>50 million years of genomic stasis in endosymbiotic bacteria.</title>
        <authorList>
            <person name="Tamas I."/>
            <person name="Klasson L."/>
            <person name="Canbaeck B."/>
            <person name="Naeslund A.K."/>
            <person name="Eriksson A.-S."/>
            <person name="Wernegreen J.J."/>
            <person name="Sandstroem J.P."/>
            <person name="Moran N.A."/>
            <person name="Andersson S.G.E."/>
        </authorList>
    </citation>
    <scope>NUCLEOTIDE SEQUENCE [LARGE SCALE GENOMIC DNA]</scope>
    <source>
        <strain>Sg</strain>
    </source>
</reference>
<dbReference type="EMBL" id="AE013218">
    <property type="protein sequence ID" value="AAM67625.1"/>
    <property type="molecule type" value="Genomic_DNA"/>
</dbReference>
<dbReference type="RefSeq" id="WP_011053591.1">
    <property type="nucleotide sequence ID" value="NC_004061.1"/>
</dbReference>
<dbReference type="SMR" id="Q8KA57"/>
<dbReference type="STRING" id="198804.BUsg_054"/>
<dbReference type="GeneID" id="93003521"/>
<dbReference type="KEGG" id="bas:BUsg_054"/>
<dbReference type="eggNOG" id="COG0828">
    <property type="taxonomic scope" value="Bacteria"/>
</dbReference>
<dbReference type="HOGENOM" id="CLU_159258_1_0_6"/>
<dbReference type="Proteomes" id="UP000000416">
    <property type="component" value="Chromosome"/>
</dbReference>
<dbReference type="GO" id="GO:1990904">
    <property type="term" value="C:ribonucleoprotein complex"/>
    <property type="evidence" value="ECO:0007669"/>
    <property type="project" value="UniProtKB-KW"/>
</dbReference>
<dbReference type="GO" id="GO:0005840">
    <property type="term" value="C:ribosome"/>
    <property type="evidence" value="ECO:0007669"/>
    <property type="project" value="UniProtKB-KW"/>
</dbReference>
<dbReference type="GO" id="GO:0003735">
    <property type="term" value="F:structural constituent of ribosome"/>
    <property type="evidence" value="ECO:0007669"/>
    <property type="project" value="InterPro"/>
</dbReference>
<dbReference type="GO" id="GO:0006412">
    <property type="term" value="P:translation"/>
    <property type="evidence" value="ECO:0007669"/>
    <property type="project" value="UniProtKB-UniRule"/>
</dbReference>
<dbReference type="FunFam" id="1.20.5.1150:FF:000001">
    <property type="entry name" value="30S ribosomal protein S21"/>
    <property type="match status" value="1"/>
</dbReference>
<dbReference type="Gene3D" id="1.20.5.1150">
    <property type="entry name" value="Ribosomal protein S8"/>
    <property type="match status" value="1"/>
</dbReference>
<dbReference type="HAMAP" id="MF_00358">
    <property type="entry name" value="Ribosomal_bS21"/>
    <property type="match status" value="1"/>
</dbReference>
<dbReference type="InterPro" id="IPR001911">
    <property type="entry name" value="Ribosomal_bS21"/>
</dbReference>
<dbReference type="InterPro" id="IPR018278">
    <property type="entry name" value="Ribosomal_bS21_CS"/>
</dbReference>
<dbReference type="InterPro" id="IPR038380">
    <property type="entry name" value="Ribosomal_bS21_sf"/>
</dbReference>
<dbReference type="NCBIfam" id="TIGR00030">
    <property type="entry name" value="S21p"/>
    <property type="match status" value="1"/>
</dbReference>
<dbReference type="PANTHER" id="PTHR21109">
    <property type="entry name" value="MITOCHONDRIAL 28S RIBOSOMAL PROTEIN S21"/>
    <property type="match status" value="1"/>
</dbReference>
<dbReference type="PANTHER" id="PTHR21109:SF22">
    <property type="entry name" value="SMALL RIBOSOMAL SUBUNIT PROTEIN BS21"/>
    <property type="match status" value="1"/>
</dbReference>
<dbReference type="Pfam" id="PF01165">
    <property type="entry name" value="Ribosomal_S21"/>
    <property type="match status" value="1"/>
</dbReference>
<dbReference type="PRINTS" id="PR00976">
    <property type="entry name" value="RIBOSOMALS21"/>
</dbReference>
<dbReference type="PROSITE" id="PS01181">
    <property type="entry name" value="RIBOSOMAL_S21"/>
    <property type="match status" value="1"/>
</dbReference>
<proteinExistence type="inferred from homology"/>
<feature type="chain" id="PRO_0000178313" description="Small ribosomal subunit protein bS21">
    <location>
        <begin position="1"/>
        <end position="71"/>
    </location>
</feature>
<comment type="similarity">
    <text evidence="1">Belongs to the bacterial ribosomal protein bS21 family.</text>
</comment>
<gene>
    <name evidence="1" type="primary">rpsU</name>
    <name type="ordered locus">BUsg_054</name>
</gene>
<organism>
    <name type="scientific">Buchnera aphidicola subsp. Schizaphis graminum (strain Sg)</name>
    <dbReference type="NCBI Taxonomy" id="198804"/>
    <lineage>
        <taxon>Bacteria</taxon>
        <taxon>Pseudomonadati</taxon>
        <taxon>Pseudomonadota</taxon>
        <taxon>Gammaproteobacteria</taxon>
        <taxon>Enterobacterales</taxon>
        <taxon>Erwiniaceae</taxon>
        <taxon>Buchnera</taxon>
    </lineage>
</organism>
<evidence type="ECO:0000255" key="1">
    <source>
        <dbReference type="HAMAP-Rule" id="MF_00358"/>
    </source>
</evidence>
<evidence type="ECO:0000305" key="2"/>
<keyword id="KW-0687">Ribonucleoprotein</keyword>
<keyword id="KW-0689">Ribosomal protein</keyword>